<evidence type="ECO:0000269" key="1">
    <source>
    </source>
</evidence>
<evidence type="ECO:0000269" key="2">
    <source>
    </source>
</evidence>
<evidence type="ECO:0000269" key="3">
    <source>
    </source>
</evidence>
<evidence type="ECO:0000269" key="4">
    <source>
    </source>
</evidence>
<evidence type="ECO:0000269" key="5">
    <source>
    </source>
</evidence>
<evidence type="ECO:0000269" key="6">
    <source>
    </source>
</evidence>
<evidence type="ECO:0000303" key="7">
    <source>
    </source>
</evidence>
<evidence type="ECO:0000303" key="8">
    <source>
    </source>
</evidence>
<evidence type="ECO:0000303" key="9">
    <source>
    </source>
</evidence>
<evidence type="ECO:0000305" key="10"/>
<evidence type="ECO:0000305" key="11">
    <source>
    </source>
</evidence>
<evidence type="ECO:0000305" key="12">
    <source>
    </source>
</evidence>
<evidence type="ECO:0000305" key="13">
    <source>
    </source>
</evidence>
<evidence type="ECO:0000305" key="14">
    <source>
    </source>
</evidence>
<evidence type="ECO:0000305" key="15">
    <source>
    </source>
</evidence>
<evidence type="ECO:0000305" key="16">
    <source>
    </source>
</evidence>
<evidence type="ECO:0000312" key="17">
    <source>
        <dbReference type="EMBL" id="CCP46637.1"/>
    </source>
</evidence>
<evidence type="ECO:0007829" key="18">
    <source>
        <dbReference type="PDB" id="4FIX"/>
    </source>
</evidence>
<evidence type="ECO:0007829" key="19">
    <source>
        <dbReference type="PDB" id="4FIY"/>
    </source>
</evidence>
<organism>
    <name type="scientific">Mycobacterium tuberculosis (strain ATCC 25618 / H37Rv)</name>
    <dbReference type="NCBI Taxonomy" id="83332"/>
    <lineage>
        <taxon>Bacteria</taxon>
        <taxon>Bacillati</taxon>
        <taxon>Actinomycetota</taxon>
        <taxon>Actinomycetes</taxon>
        <taxon>Mycobacteriales</taxon>
        <taxon>Mycobacteriaceae</taxon>
        <taxon>Mycobacterium</taxon>
        <taxon>Mycobacterium tuberculosis complex</taxon>
    </lineage>
</organism>
<feature type="chain" id="PRO_0000395356" description="Galactofuranosyltransferase GlfT2">
    <location>
        <begin position="1"/>
        <end position="637"/>
    </location>
</feature>
<feature type="active site" description="Proton acceptor" evidence="16">
    <location>
        <position position="372"/>
    </location>
</feature>
<feature type="binding site" evidence="16">
    <location>
        <position position="171"/>
    </location>
    <ligand>
        <name>UDP-alpha-D-galactofuranose</name>
        <dbReference type="ChEBI" id="CHEBI:66915"/>
    </ligand>
</feature>
<feature type="binding site" evidence="16">
    <location>
        <position position="200"/>
    </location>
    <ligand>
        <name>UDP-alpha-D-galactofuranose</name>
        <dbReference type="ChEBI" id="CHEBI:66915"/>
    </ligand>
</feature>
<feature type="binding site" evidence="16">
    <location>
        <position position="229"/>
    </location>
    <ligand>
        <name>UDP-alpha-D-galactofuranose</name>
        <dbReference type="ChEBI" id="CHEBI:66915"/>
    </ligand>
</feature>
<feature type="binding site" evidence="6">
    <location>
        <position position="256"/>
    </location>
    <ligand>
        <name>Mn(2+)</name>
        <dbReference type="ChEBI" id="CHEBI:29035"/>
    </ligand>
</feature>
<feature type="binding site" evidence="16">
    <location>
        <position position="256"/>
    </location>
    <ligand>
        <name>UDP-alpha-D-galactofuranose</name>
        <dbReference type="ChEBI" id="CHEBI:66915"/>
    </ligand>
</feature>
<feature type="binding site" evidence="6">
    <location>
        <position position="258"/>
    </location>
    <ligand>
        <name>Mn(2+)</name>
        <dbReference type="ChEBI" id="CHEBI:29035"/>
    </ligand>
</feature>
<feature type="binding site" evidence="6">
    <location>
        <position position="396"/>
    </location>
    <ligand>
        <name>Mn(2+)</name>
        <dbReference type="ChEBI" id="CHEBI:29035"/>
    </ligand>
</feature>
<feature type="mutagenesis site" description="1400-fold decrease in transferase activity. No effect on affinity for the substrate UDP-Galf." evidence="6">
    <original>E</original>
    <variation>S</variation>
    <location>
        <position position="300"/>
    </location>
</feature>
<feature type="mutagenesis site" description="Loss of transferase activity." evidence="6">
    <original>D</original>
    <variation>S</variation>
    <location>
        <position position="371"/>
    </location>
</feature>
<feature type="mutagenesis site" description="Loss of transferase activity." evidence="6">
    <original>D</original>
    <variation>S</variation>
    <location>
        <position position="372"/>
    </location>
</feature>
<feature type="mutagenesis site" description="1200-fold decrease in transferase activity. No effect on affinity for the substrate UDP-Galf." evidence="6">
    <original>W</original>
    <variation>S</variation>
    <location>
        <position position="399"/>
    </location>
</feature>
<feature type="mutagenesis site" description="1700-fold decrease in transferase activity. No effect on affinity for the substrate UDP-Galf." evidence="6">
    <original>H</original>
    <variation>S</variation>
    <location>
        <position position="413"/>
    </location>
</feature>
<feature type="helix" evidence="18">
    <location>
        <begin position="3"/>
        <end position="7"/>
    </location>
</feature>
<feature type="strand" evidence="18">
    <location>
        <begin position="8"/>
        <end position="11"/>
    </location>
</feature>
<feature type="helix" evidence="18">
    <location>
        <begin position="21"/>
        <end position="24"/>
    </location>
</feature>
<feature type="turn" evidence="18">
    <location>
        <begin position="25"/>
        <end position="27"/>
    </location>
</feature>
<feature type="strand" evidence="18">
    <location>
        <begin position="34"/>
        <end position="36"/>
    </location>
</feature>
<feature type="strand" evidence="18">
    <location>
        <begin position="39"/>
        <end position="42"/>
    </location>
</feature>
<feature type="strand" evidence="18">
    <location>
        <begin position="45"/>
        <end position="48"/>
    </location>
</feature>
<feature type="strand" evidence="18">
    <location>
        <begin position="53"/>
        <end position="55"/>
    </location>
</feature>
<feature type="turn" evidence="18">
    <location>
        <begin position="59"/>
        <end position="61"/>
    </location>
</feature>
<feature type="helix" evidence="18">
    <location>
        <begin position="65"/>
        <end position="71"/>
    </location>
</feature>
<feature type="strand" evidence="18">
    <location>
        <begin position="75"/>
        <end position="94"/>
    </location>
</feature>
<feature type="strand" evidence="18">
    <location>
        <begin position="100"/>
        <end position="110"/>
    </location>
</feature>
<feature type="strand" evidence="18">
    <location>
        <begin position="112"/>
        <end position="114"/>
    </location>
</feature>
<feature type="strand" evidence="18">
    <location>
        <begin position="116"/>
        <end position="124"/>
    </location>
</feature>
<feature type="strand" evidence="18">
    <location>
        <begin position="128"/>
        <end position="130"/>
    </location>
</feature>
<feature type="strand" evidence="18">
    <location>
        <begin position="133"/>
        <end position="141"/>
    </location>
</feature>
<feature type="strand" evidence="18">
    <location>
        <begin position="143"/>
        <end position="151"/>
    </location>
</feature>
<feature type="strand" evidence="18">
    <location>
        <begin position="162"/>
        <end position="165"/>
    </location>
</feature>
<feature type="strand" evidence="18">
    <location>
        <begin position="168"/>
        <end position="170"/>
    </location>
</feature>
<feature type="helix" evidence="18">
    <location>
        <begin position="172"/>
        <end position="182"/>
    </location>
</feature>
<feature type="helix" evidence="18">
    <location>
        <begin position="186"/>
        <end position="189"/>
    </location>
</feature>
<feature type="strand" evidence="18">
    <location>
        <begin position="192"/>
        <end position="199"/>
    </location>
</feature>
<feature type="strand" evidence="18">
    <location>
        <begin position="201"/>
        <end position="203"/>
    </location>
</feature>
<feature type="helix" evidence="18">
    <location>
        <begin position="205"/>
        <end position="207"/>
    </location>
</feature>
<feature type="helix" evidence="18">
    <location>
        <begin position="211"/>
        <end position="218"/>
    </location>
</feature>
<feature type="helix" evidence="18">
    <location>
        <begin position="219"/>
        <end position="221"/>
    </location>
</feature>
<feature type="strand" evidence="18">
    <location>
        <begin position="222"/>
        <end position="226"/>
    </location>
</feature>
<feature type="helix" evidence="18">
    <location>
        <begin position="231"/>
        <end position="246"/>
    </location>
</feature>
<feature type="strand" evidence="18">
    <location>
        <begin position="250"/>
        <end position="255"/>
    </location>
</feature>
<feature type="strand" evidence="18">
    <location>
        <begin position="257"/>
        <end position="261"/>
    </location>
</feature>
<feature type="helix" evidence="18">
    <location>
        <begin position="264"/>
        <end position="275"/>
    </location>
</feature>
<feature type="strand" evidence="18">
    <location>
        <begin position="276"/>
        <end position="278"/>
    </location>
</feature>
<feature type="strand" evidence="18">
    <location>
        <begin position="281"/>
        <end position="288"/>
    </location>
</feature>
<feature type="strand" evidence="18">
    <location>
        <begin position="300"/>
        <end position="303"/>
    </location>
</feature>
<feature type="turn" evidence="18">
    <location>
        <begin position="304"/>
        <end position="307"/>
    </location>
</feature>
<feature type="strand" evidence="18">
    <location>
        <begin position="308"/>
        <end position="311"/>
    </location>
</feature>
<feature type="turn" evidence="18">
    <location>
        <begin position="321"/>
        <end position="323"/>
    </location>
</feature>
<feature type="helix" evidence="18">
    <location>
        <begin position="331"/>
        <end position="334"/>
    </location>
</feature>
<feature type="helix" evidence="18">
    <location>
        <begin position="335"/>
        <end position="337"/>
    </location>
</feature>
<feature type="strand" evidence="18">
    <location>
        <begin position="349"/>
        <end position="353"/>
    </location>
</feature>
<feature type="helix" evidence="18">
    <location>
        <begin position="354"/>
        <end position="360"/>
    </location>
</feature>
<feature type="strand" evidence="18">
    <location>
        <begin position="367"/>
        <end position="370"/>
    </location>
</feature>
<feature type="helix" evidence="18">
    <location>
        <begin position="371"/>
        <end position="381"/>
    </location>
</feature>
<feature type="strand" evidence="18">
    <location>
        <begin position="386"/>
        <end position="396"/>
    </location>
</feature>
<feature type="strand" evidence="18">
    <location>
        <begin position="399"/>
        <end position="402"/>
    </location>
</feature>
<feature type="strand" evidence="19">
    <location>
        <begin position="405"/>
        <end position="407"/>
    </location>
</feature>
<feature type="helix" evidence="18">
    <location>
        <begin position="409"/>
        <end position="424"/>
    </location>
</feature>
<feature type="helix" evidence="18">
    <location>
        <begin position="429"/>
        <end position="431"/>
    </location>
</feature>
<feature type="helix" evidence="18">
    <location>
        <begin position="432"/>
        <end position="448"/>
    </location>
</feature>
<feature type="helix" evidence="18">
    <location>
        <begin position="452"/>
        <end position="466"/>
    </location>
</feature>
<feature type="helix" evidence="18">
    <location>
        <begin position="469"/>
        <end position="474"/>
    </location>
</feature>
<feature type="turn" evidence="18">
    <location>
        <begin position="475"/>
        <end position="478"/>
    </location>
</feature>
<feature type="helix" evidence="18">
    <location>
        <begin position="479"/>
        <end position="487"/>
    </location>
</feature>
<feature type="helix" evidence="18">
    <location>
        <begin position="491"/>
        <end position="493"/>
    </location>
</feature>
<feature type="strand" evidence="19">
    <location>
        <begin position="494"/>
        <end position="497"/>
    </location>
</feature>
<feature type="helix" evidence="18">
    <location>
        <begin position="499"/>
        <end position="501"/>
    </location>
</feature>
<feature type="helix" evidence="18">
    <location>
        <begin position="518"/>
        <end position="532"/>
    </location>
</feature>
<feature type="helix" evidence="18">
    <location>
        <begin position="538"/>
        <end position="541"/>
    </location>
</feature>
<feature type="strand" evidence="18">
    <location>
        <begin position="545"/>
        <end position="548"/>
    </location>
</feature>
<feature type="helix" evidence="18">
    <location>
        <begin position="550"/>
        <end position="552"/>
    </location>
</feature>
<feature type="helix" evidence="18">
    <location>
        <begin position="555"/>
        <end position="558"/>
    </location>
</feature>
<feature type="strand" evidence="18">
    <location>
        <begin position="562"/>
        <end position="567"/>
    </location>
</feature>
<feature type="strand" evidence="18">
    <location>
        <begin position="574"/>
        <end position="578"/>
    </location>
</feature>
<feature type="helix" evidence="18">
    <location>
        <begin position="581"/>
        <end position="611"/>
    </location>
</feature>
<feature type="helix" evidence="18">
    <location>
        <begin position="613"/>
        <end position="617"/>
    </location>
</feature>
<feature type="helix" evidence="18">
    <location>
        <begin position="619"/>
        <end position="626"/>
    </location>
</feature>
<reference key="1">
    <citation type="journal article" date="1998" name="Nature">
        <title>Deciphering the biology of Mycobacterium tuberculosis from the complete genome sequence.</title>
        <authorList>
            <person name="Cole S.T."/>
            <person name="Brosch R."/>
            <person name="Parkhill J."/>
            <person name="Garnier T."/>
            <person name="Churcher C.M."/>
            <person name="Harris D.E."/>
            <person name="Gordon S.V."/>
            <person name="Eiglmeier K."/>
            <person name="Gas S."/>
            <person name="Barry C.E. III"/>
            <person name="Tekaia F."/>
            <person name="Badcock K."/>
            <person name="Basham D."/>
            <person name="Brown D."/>
            <person name="Chillingworth T."/>
            <person name="Connor R."/>
            <person name="Davies R.M."/>
            <person name="Devlin K."/>
            <person name="Feltwell T."/>
            <person name="Gentles S."/>
            <person name="Hamlin N."/>
            <person name="Holroyd S."/>
            <person name="Hornsby T."/>
            <person name="Jagels K."/>
            <person name="Krogh A."/>
            <person name="McLean J."/>
            <person name="Moule S."/>
            <person name="Murphy L.D."/>
            <person name="Oliver S."/>
            <person name="Osborne J."/>
            <person name="Quail M.A."/>
            <person name="Rajandream M.A."/>
            <person name="Rogers J."/>
            <person name="Rutter S."/>
            <person name="Seeger K."/>
            <person name="Skelton S."/>
            <person name="Squares S."/>
            <person name="Squares R."/>
            <person name="Sulston J.E."/>
            <person name="Taylor K."/>
            <person name="Whitehead S."/>
            <person name="Barrell B.G."/>
        </authorList>
    </citation>
    <scope>NUCLEOTIDE SEQUENCE [LARGE SCALE GENOMIC DNA]</scope>
    <source>
        <strain>ATCC 25618 / H37Rv</strain>
    </source>
</reference>
<reference key="2">
    <citation type="journal article" date="2000" name="J. Biol. Chem.">
        <title>Biosynthesis of the galactan component of the mycobacterial cell wall.</title>
        <authorList>
            <person name="Mikusova K."/>
            <person name="Yagi T."/>
            <person name="Stern R."/>
            <person name="McNeil M.R."/>
            <person name="Besra G.S."/>
            <person name="Crick D.C."/>
            <person name="Brennan P.J."/>
        </authorList>
    </citation>
    <scope>FUNCTION AS A GALACTOFURANOSYLTRANSFERASE</scope>
</reference>
<reference key="3">
    <citation type="journal article" date="2001" name="J. Biol. Chem.">
        <title>Galactan biosynthesis in Mycobacterium tuberculosis. Identification of a bifunctional UDP-galactofuranosyltransferase.</title>
        <authorList>
            <person name="Kremer L."/>
            <person name="Dover L.G."/>
            <person name="Morehouse C."/>
            <person name="Hitchin P."/>
            <person name="Everett M."/>
            <person name="Morris H.R."/>
            <person name="Dell A."/>
            <person name="Brennan P.J."/>
            <person name="McNeil M.R."/>
            <person name="Flaherty C."/>
            <person name="Duncan K."/>
            <person name="Besra G.S."/>
        </authorList>
    </citation>
    <scope>FUNCTION AS A GALACTOFURANOSYLTRANSFERASE</scope>
    <scope>SUBCELLULAR LOCATION</scope>
    <scope>PATHWAY</scope>
    <source>
        <strain>ATCC 25618 / H37Rv</strain>
    </source>
</reference>
<reference key="4">
    <citation type="journal article" date="2006" name="J. Am. Chem. Soc.">
        <title>Expression, purification, and characterization of a galactofuranosyltransferase involved in Mycobacterium tuberculosis arabinogalactan biosynthesis.</title>
        <authorList>
            <person name="Rose N.L."/>
            <person name="Completo G.C."/>
            <person name="Lin S.J."/>
            <person name="McNeil M."/>
            <person name="Palcic M.M."/>
            <person name="Lowary T.L."/>
        </authorList>
    </citation>
    <scope>FUNCTION AS A GALACTOFURANOSYLTRANSFERASE</scope>
    <scope>CATALYTIC ACTIVITY</scope>
    <scope>BIOPHYSICOCHEMICAL PROPERTIES</scope>
    <scope>SUBSTRATE SPECIFICITY</scope>
    <scope>PATHWAY</scope>
</reference>
<reference key="5">
    <citation type="journal article" date="2008" name="BMC Syst. Biol.">
        <title>targetTB: a target identification pipeline for Mycobacterium tuberculosis through an interactome, reactome and genome-scale structural analysis.</title>
        <authorList>
            <person name="Raman K."/>
            <person name="Yeturu K."/>
            <person name="Chandra N."/>
        </authorList>
    </citation>
    <scope>IDENTIFICATION AS A DRUG TARGET [LARGE SCALE ANALYSIS]</scope>
</reference>
<reference key="6">
    <citation type="journal article" date="2008" name="Carbohydr. Res.">
        <title>Development of a coupled spectrophotometric assay for GlfT2, a bifunctional mycobacterial galactofuranosyltransferase.</title>
        <authorList>
            <person name="Rose N.L."/>
            <person name="Zheng R.B."/>
            <person name="Pearcey J."/>
            <person name="Zhou R."/>
            <person name="Completo G.C."/>
            <person name="Lowary T.L."/>
        </authorList>
    </citation>
    <scope>FUNCTION AS A GALACTOFURANOSYLTRANSFERASE</scope>
    <scope>BIOPHYSICOCHEMICAL PROPERTIES</scope>
</reference>
<reference key="7">
    <citation type="journal article" date="2008" name="J. Bacteriol.">
        <title>Galactosyl transferases in mycobacterial cell wall synthesis.</title>
        <authorList>
            <person name="Belanova M."/>
            <person name="Dianiskova P."/>
            <person name="Brennan P.J."/>
            <person name="Completo G.C."/>
            <person name="Rose N.L."/>
            <person name="Lowary T.L."/>
            <person name="Mikusova K."/>
        </authorList>
    </citation>
    <scope>FUNCTION</scope>
    <scope>CATALYTIC ACTIVITY</scope>
    <scope>SUBSTRATE SPECIFICITY</scope>
</reference>
<reference key="8">
    <citation type="journal article" date="2009" name="Proc. Natl. Acad. Sci. U.S.A.">
        <title>A tethering mechanism for length control in a processive carbohydrate polymerization.</title>
        <authorList>
            <person name="May J.F."/>
            <person name="Splain R.A."/>
            <person name="Brotschi C."/>
            <person name="Kiessling L.L."/>
        </authorList>
    </citation>
    <scope>FUNCTION</scope>
    <scope>CATALYTIC ACTIVITY</scope>
    <scope>POLYMER LENGTH CONTROL</scope>
    <source>
        <strain>H37Rv</strain>
    </source>
</reference>
<reference key="9">
    <citation type="journal article" date="2011" name="Mol. Cell. Proteomics">
        <title>Proteogenomic analysis of Mycobacterium tuberculosis by high resolution mass spectrometry.</title>
        <authorList>
            <person name="Kelkar D.S."/>
            <person name="Kumar D."/>
            <person name="Kumar P."/>
            <person name="Balakrishnan L."/>
            <person name="Muthusamy B."/>
            <person name="Yadav A.K."/>
            <person name="Shrivastava P."/>
            <person name="Marimuthu A."/>
            <person name="Anand S."/>
            <person name="Sundaram H."/>
            <person name="Kingsbury R."/>
            <person name="Harsha H.C."/>
            <person name="Nair B."/>
            <person name="Prasad T.S."/>
            <person name="Chauhan D.S."/>
            <person name="Katoch K."/>
            <person name="Katoch V.M."/>
            <person name="Kumar P."/>
            <person name="Chaerkady R."/>
            <person name="Ramachandran S."/>
            <person name="Dash D."/>
            <person name="Pandey A."/>
        </authorList>
    </citation>
    <scope>IDENTIFICATION BY MASS SPECTROMETRY [LARGE SCALE ANALYSIS]</scope>
    <source>
        <strain>ATCC 25618 / H37Rv</strain>
    </source>
</reference>
<reference key="10">
    <citation type="journal article" date="2012" name="J. Biol. Chem.">
        <title>Tetrameric structure of the GlfT2 galactofuranosyltransferase reveals a scaffold for the assembly of mycobacterial arabinogalactan.</title>
        <authorList>
            <person name="Wheatley R.W."/>
            <person name="Zheng R.B."/>
            <person name="Richards M.R."/>
            <person name="Lowary T.L."/>
            <person name="Ng K.K."/>
        </authorList>
    </citation>
    <scope>X-RAY CRYSTALLOGRAPHY (2.45 ANGSTROMS) IN COMPLEXES WITH UDP AND MANGANESE IONS</scope>
    <scope>MUTAGENESIS OF GLU-300; ASP-371; ASP-372; TRP-399 AND HIS-413</scope>
    <scope>BIOPHYSICOCHEMICAL PROPERTIES</scope>
    <scope>COFACTOR</scope>
    <scope>ACTIVE SITE</scope>
    <scope>SUBUNIT</scope>
</reference>
<protein>
    <recommendedName>
        <fullName evidence="10">Galactofuranosyltransferase GlfT2</fullName>
        <shortName evidence="10">GalTr 2</shortName>
        <ecNumber evidence="3 5 13">2.4.1.288</ecNumber>
    </recommendedName>
    <alternativeName>
        <fullName evidence="10">Arabinogalactan galactosyltransferase 2</fullName>
    </alternativeName>
    <alternativeName>
        <fullName>Galactofuranosylgalactofuranosylrhamnosyl-N-acetylglucosaminyl-diphospho-decaprenol beta-1,5/1,6-galactofuranosyltransferase</fullName>
    </alternativeName>
    <alternativeName>
        <fullName evidence="10">Polymerizing galactofuranosyltransferase GlfT2</fullName>
    </alternativeName>
</protein>
<keyword id="KW-0002">3D-structure</keyword>
<keyword id="KW-1003">Cell membrane</keyword>
<keyword id="KW-0961">Cell wall biogenesis/degradation</keyword>
<keyword id="KW-0328">Glycosyltransferase</keyword>
<keyword id="KW-0460">Magnesium</keyword>
<keyword id="KW-0464">Manganese</keyword>
<keyword id="KW-0472">Membrane</keyword>
<keyword id="KW-0479">Metal-binding</keyword>
<keyword id="KW-1185">Reference proteome</keyword>
<keyword id="KW-0808">Transferase</keyword>
<name>GLFT2_MYCTU</name>
<proteinExistence type="evidence at protein level"/>
<sequence length="637" mass="71507">MSELAASLLSRVILPRPGEPLDVRKLYLEESTTNARRAHAPTRTSLQIGAESEVSFATYFNAFPASYWRRWTTCKSVVLRVQVTGAGRVDVYRTKATGARIFVEGHDFTGTEDQPAAVETEVVLQPFEDGGWVWFDITTDTAVTLHSGGWYATSPAPGTANIAVGIPTFNRPADCVNALRELTADPLVDQVIGAVIVPDQGERKVRDHPDFPAAAARLGSRLSIHDQPNLGGSGGYSRVMYEALKNTDCQQILFMDDDIRLEPDSILRVLAMHRFAKAPMLVGGQMLNLQEPSHLHIMGEVVDRSIFMWTAAPHAEYDHDFAEYPLNDNNSRSKLLHRRIDVDYNGWWTCMIPRQVAEELGQPLPLFIKWDDADYGLRAAEHGYPTVTLPGAAIWHMAWSDKDDAIDWQAYFHLRNRLVVAAMHWDGPKAQVIGLVRSHLKATLKHLACLEYSTVAIQNKAIDDFLAGPEHIFSILESALPQVHRIRKSYPDAVVLPAASELPPPLHKNKAMKPPVNPLVIGYRLARGIMHNLTAANPQHHRRPEFNVPTQDARWFLLCTVDGATVTTADGCGVVYRQRDRAKMFALLWQSLRRQRQLLKRFEEMRRIYRDALPTLSSKQKWETALLPAANQEPEHG</sequence>
<gene>
    <name evidence="9 17" type="primary">glfT2</name>
    <name evidence="7 8" type="synonym">glfT</name>
    <name type="ordered locus">Rv3808c</name>
</gene>
<dbReference type="EC" id="2.4.1.288" evidence="3 5 13"/>
<dbReference type="EMBL" id="AL123456">
    <property type="protein sequence ID" value="CCP46637.1"/>
    <property type="molecule type" value="Genomic_DNA"/>
</dbReference>
<dbReference type="PIR" id="D70888">
    <property type="entry name" value="D70888"/>
</dbReference>
<dbReference type="RefSeq" id="NP_218325.1">
    <property type="nucleotide sequence ID" value="NC_000962.3"/>
</dbReference>
<dbReference type="RefSeq" id="WP_003900761.1">
    <property type="nucleotide sequence ID" value="NZ_NVQJ01000022.1"/>
</dbReference>
<dbReference type="PDB" id="4FIX">
    <property type="method" value="X-ray"/>
    <property type="resolution" value="2.45 A"/>
    <property type="chains" value="A/B=1-637"/>
</dbReference>
<dbReference type="PDB" id="4FIY">
    <property type="method" value="X-ray"/>
    <property type="resolution" value="3.10 A"/>
    <property type="chains" value="A/B=1-637"/>
</dbReference>
<dbReference type="PDBsum" id="4FIX"/>
<dbReference type="PDBsum" id="4FIY"/>
<dbReference type="SMR" id="O53585"/>
<dbReference type="FunCoup" id="O53585">
    <property type="interactions" value="13"/>
</dbReference>
<dbReference type="STRING" id="83332.Rv3808c"/>
<dbReference type="BindingDB" id="O53585"/>
<dbReference type="ChEMBL" id="CHEMBL1075096"/>
<dbReference type="CAZy" id="GT2">
    <property type="family name" value="Glycosyltransferase Family 2"/>
</dbReference>
<dbReference type="PaxDb" id="83332-Rv3808c"/>
<dbReference type="DNASU" id="886136"/>
<dbReference type="GeneID" id="886136"/>
<dbReference type="KEGG" id="mtu:Rv3808c"/>
<dbReference type="KEGG" id="mtv:RVBD_3808c"/>
<dbReference type="TubercuList" id="Rv3808c"/>
<dbReference type="eggNOG" id="COG1216">
    <property type="taxonomic scope" value="Bacteria"/>
</dbReference>
<dbReference type="InParanoid" id="O53585"/>
<dbReference type="OrthoDB" id="3225550at2"/>
<dbReference type="PhylomeDB" id="O53585"/>
<dbReference type="BioCyc" id="MetaCyc:G185E-8104-MONOMER"/>
<dbReference type="BRENDA" id="2.4.1.288">
    <property type="organism ID" value="3445"/>
</dbReference>
<dbReference type="SABIO-RK" id="O53585"/>
<dbReference type="UniPathway" id="UPA00963"/>
<dbReference type="EvolutionaryTrace" id="O53585"/>
<dbReference type="PRO" id="PR:O53585"/>
<dbReference type="Proteomes" id="UP000001584">
    <property type="component" value="Chromosome"/>
</dbReference>
<dbReference type="GO" id="GO:0005829">
    <property type="term" value="C:cytosol"/>
    <property type="evidence" value="ECO:0007005"/>
    <property type="project" value="MTBBASE"/>
</dbReference>
<dbReference type="GO" id="GO:0005886">
    <property type="term" value="C:plasma membrane"/>
    <property type="evidence" value="ECO:0007005"/>
    <property type="project" value="MTBBASE"/>
</dbReference>
<dbReference type="GO" id="GO:0016757">
    <property type="term" value="F:glycosyltransferase activity"/>
    <property type="evidence" value="ECO:0000314"/>
    <property type="project" value="UniProtKB"/>
</dbReference>
<dbReference type="GO" id="GO:0035496">
    <property type="term" value="F:lipopolysaccharide-1,5-galactosyltransferase activity"/>
    <property type="evidence" value="ECO:0000314"/>
    <property type="project" value="MTBBASE"/>
</dbReference>
<dbReference type="GO" id="GO:0008921">
    <property type="term" value="F:lipopolysaccharide-1,6-galactosyltransferase activity"/>
    <property type="evidence" value="ECO:0000314"/>
    <property type="project" value="MTBBASE"/>
</dbReference>
<dbReference type="GO" id="GO:0046872">
    <property type="term" value="F:metal ion binding"/>
    <property type="evidence" value="ECO:0007669"/>
    <property type="project" value="UniProtKB-KW"/>
</dbReference>
<dbReference type="GO" id="GO:0016740">
    <property type="term" value="F:transferase activity"/>
    <property type="evidence" value="ECO:0000314"/>
    <property type="project" value="UniProtKB"/>
</dbReference>
<dbReference type="GO" id="GO:0035250">
    <property type="term" value="F:UDP-galactosyltransferase activity"/>
    <property type="evidence" value="ECO:0000314"/>
    <property type="project" value="MTBBASE"/>
</dbReference>
<dbReference type="GO" id="GO:0045227">
    <property type="term" value="P:capsule polysaccharide biosynthetic process"/>
    <property type="evidence" value="ECO:0007669"/>
    <property type="project" value="UniProtKB-UniPathway"/>
</dbReference>
<dbReference type="GO" id="GO:0044038">
    <property type="term" value="P:cell wall macromolecule biosynthetic process"/>
    <property type="evidence" value="ECO:0000314"/>
    <property type="project" value="UniProtKB"/>
</dbReference>
<dbReference type="GO" id="GO:0071555">
    <property type="term" value="P:cell wall organization"/>
    <property type="evidence" value="ECO:0000314"/>
    <property type="project" value="UniProtKB"/>
</dbReference>
<dbReference type="GO" id="GO:0070592">
    <property type="term" value="P:cell wall polysaccharide biosynthetic process"/>
    <property type="evidence" value="ECO:0000314"/>
    <property type="project" value="MTBBASE"/>
</dbReference>
<dbReference type="GO" id="GO:0009103">
    <property type="term" value="P:lipopolysaccharide biosynthetic process"/>
    <property type="evidence" value="ECO:0000314"/>
    <property type="project" value="MTBBASE"/>
</dbReference>
<dbReference type="GO" id="GO:0071769">
    <property type="term" value="P:mycolate cell wall layer assembly"/>
    <property type="evidence" value="ECO:0000314"/>
    <property type="project" value="MTBBASE"/>
</dbReference>
<dbReference type="GO" id="GO:0052573">
    <property type="term" value="P:UDP-D-galactose metabolic process"/>
    <property type="evidence" value="ECO:0000314"/>
    <property type="project" value="MTBBASE"/>
</dbReference>
<dbReference type="FunFam" id="3.90.550.60:FF:000001">
    <property type="entry name" value="UDP-galactofuranosyl transferase GlfT2"/>
    <property type="match status" value="1"/>
</dbReference>
<dbReference type="Gene3D" id="3.90.550.60">
    <property type="match status" value="1"/>
</dbReference>
<dbReference type="InterPro" id="IPR045699">
    <property type="entry name" value="GlfT2_C"/>
</dbReference>
<dbReference type="InterPro" id="IPR040492">
    <property type="entry name" value="GlfT2_N"/>
</dbReference>
<dbReference type="InterPro" id="IPR029044">
    <property type="entry name" value="Nucleotide-diphossugar_trans"/>
</dbReference>
<dbReference type="PANTHER" id="PTHR43179:SF12">
    <property type="entry name" value="GALACTOFURANOSYLTRANSFERASE GLFT2"/>
    <property type="match status" value="1"/>
</dbReference>
<dbReference type="PANTHER" id="PTHR43179">
    <property type="entry name" value="RHAMNOSYLTRANSFERASE WBBL"/>
    <property type="match status" value="1"/>
</dbReference>
<dbReference type="Pfam" id="PF19320">
    <property type="entry name" value="GlfT2_domain3"/>
    <property type="match status" value="1"/>
</dbReference>
<dbReference type="Pfam" id="PF17994">
    <property type="entry name" value="Glft2_N"/>
    <property type="match status" value="1"/>
</dbReference>
<dbReference type="Pfam" id="PF13641">
    <property type="entry name" value="Glyco_tranf_2_3"/>
    <property type="match status" value="1"/>
</dbReference>
<dbReference type="SUPFAM" id="SSF53448">
    <property type="entry name" value="Nucleotide-diphospho-sugar transferases"/>
    <property type="match status" value="1"/>
</dbReference>
<comment type="function">
    <text evidence="3 5 11 12 13 14">Involved in the galactan polymerization of the arabinogalactan (AG) region of the mycolylarabinogalactan-peptidoglycan (mAGP) complex, an essential component of the mycobacteria cell wall. Thus, successively transfers approximately 28 galactofuranosyl (Galf) residues from UDP-galactofuranose (UDP-Galf) onto the galactofuranosyl-galactofuranosyl-rhamnosyl-GlcNAc-diphospho-decaprenol (Galf-Galf-Rha-GlcNAc-PP-C50) acceptor produced by GlfT1, with alternating 1-&gt;5 and 1-&gt;6 links, forming a galactan domain with approximately 30 galactofuranosyl residues.</text>
</comment>
<comment type="catalytic activity">
    <reaction evidence="3 5 13">
        <text>beta-D-galactofuranosyl-(1-&gt;5)-beta-D-galactofuranosyl-(1-&gt;4)-alpha-L-rhamnosyl-(1-&gt;3)-N-acetyl-alpha-D-glucosaminyl-diphospho-trans,octa-cis-decaprenol + 28 UDP-alpha-D-galactofuranose = [beta-D-galactofuranosyl-(1-&gt;5)-beta-D-galactofuranosyl-(1-&gt;6)]14-beta-D-galactofuranosyl-(1-&gt;5)-beta-D-galactofuranosyl-(1-&gt;4)-alpha-L-rhamnopyranosyl-(1-&gt;3)-N-acetyl-alpha-D-glucosaminyl-diphospho-trans,octa-cis-decaprenol + 28 UDP + 28 H(+)</text>
        <dbReference type="Rhea" id="RHEA:34391"/>
        <dbReference type="ChEBI" id="CHEBI:15378"/>
        <dbReference type="ChEBI" id="CHEBI:58223"/>
        <dbReference type="ChEBI" id="CHEBI:66915"/>
        <dbReference type="ChEBI" id="CHEBI:67210"/>
        <dbReference type="ChEBI" id="CHEBI:67212"/>
        <dbReference type="EC" id="2.4.1.288"/>
    </reaction>
</comment>
<comment type="cofactor">
    <cofactor evidence="16">
        <name>Mn(2+)</name>
        <dbReference type="ChEBI" id="CHEBI:29035"/>
    </cofactor>
    <cofactor evidence="16">
        <name>Mg(2+)</name>
        <dbReference type="ChEBI" id="CHEBI:18420"/>
    </cofactor>
</comment>
<comment type="biophysicochemical properties">
    <kinetics>
        <KM evidence="4 6">0.38 mM for UDP-Galf</KM>
        <KM evidence="4 6">0.6 mM for beta-D-Galf-(1-&gt;5)-beta-D-Galf-(1-&gt;6)-beta-D-Galf-octyl</KM>
        <KM evidence="2">1.7 mM for beta-D-Galf-(1-&gt;5)-beta-D-Galf-octyl</KM>
        <KM evidence="2">0.635 mM for beta-D-Galf-(1-&gt;6)-beta-D-Galf-octyl</KM>
        <KM evidence="2">0.208 mM for beta-D-Galf-(1-&gt;5)-beta-D-Galf-(1-&gt;6)-beta-D-Galf-octyl</KM>
        <KM evidence="2">0.204 mM for beta-D-Galf-(1-&gt;6)-beta-D-Galf-(1-&gt;5)-beta-D-Galf-octyl</KM>
        <Vmax evidence="2 4">4.4 umol/min/mg enzyme for galtactose transfer on beta-D-Galf-(1-&gt;5)-beta-D-Galf-(1-&gt;6)-beta-D-Galf-octyl</Vmax>
        <text evidence="4 6">kcat is 430 min(-1) for galtactose transfer on beta-D-Galf-(1-&gt;5)-beta-D-Galf-(1-&gt;6)-beta-D-Galf-octyl.</text>
    </kinetics>
</comment>
<comment type="pathway">
    <text evidence="12 13">Cell wall biogenesis; cell wall polysaccharide biosynthesis.</text>
</comment>
<comment type="subunit">
    <text evidence="6">Homotetramer.</text>
</comment>
<comment type="subcellular location">
    <subcellularLocation>
        <location evidence="1">Cell membrane</location>
    </subcellularLocation>
</comment>
<comment type="miscellaneous">
    <text evidence="15">Was identified as a high-confidence drug target.</text>
</comment>
<comment type="similarity">
    <text evidence="10">Belongs to the glycosyltransferase 2 family.</text>
</comment>
<accession>O53585</accession>
<accession>L0TFB5</accession>